<sequence length="241" mass="25955">MATNAKPVYKRILLKLSGEALQGTEGFGIDASILDRMAQEIKELVELGIQVGVVIGGGNLFRGAGLAKAGMNRVVGDHMGMLATVMNGLAMRDALHRAYVNARLMSAIPLNGVCDNYSWAEAISLLRNNRVVILSAGTGNPFFTTDSAACLRGIEIEADVVLKATKVDGVFTADPAKDPSATMYDQLTYSEVLDKELKVMDLAAFTLARDHKLPIRVFNMNKPGALRRVVMGEKEGTLITE</sequence>
<proteinExistence type="evidence at protein level"/>
<reference key="1">
    <citation type="journal article" date="2001" name="Nature">
        <title>Complete genome sequence of Salmonella enterica serovar Typhimurium LT2.</title>
        <authorList>
            <person name="McClelland M."/>
            <person name="Sanderson K.E."/>
            <person name="Spieth J."/>
            <person name="Clifton S.W."/>
            <person name="Latreille P."/>
            <person name="Courtney L."/>
            <person name="Porwollik S."/>
            <person name="Ali J."/>
            <person name="Dante M."/>
            <person name="Du F."/>
            <person name="Hou S."/>
            <person name="Layman D."/>
            <person name="Leonard S."/>
            <person name="Nguyen C."/>
            <person name="Scott K."/>
            <person name="Holmes A."/>
            <person name="Grewal N."/>
            <person name="Mulvaney E."/>
            <person name="Ryan E."/>
            <person name="Sun H."/>
            <person name="Florea L."/>
            <person name="Miller W."/>
            <person name="Stoneking T."/>
            <person name="Nhan M."/>
            <person name="Waterston R."/>
            <person name="Wilson R.K."/>
        </authorList>
    </citation>
    <scope>NUCLEOTIDE SEQUENCE [LARGE SCALE GENOMIC DNA]</scope>
    <source>
        <strain>LT2 / SGSC1412 / ATCC 700720</strain>
    </source>
</reference>
<reference key="2">
    <citation type="journal article" date="2007" name="J. Biol. Chem.">
        <title>Regulatory mechanisms differ in UMP kinases from Gram-negative and Gram-positive bacteria.</title>
        <authorList>
            <person name="Evrin C."/>
            <person name="Straut M."/>
            <person name="Slavova-Azmanova N."/>
            <person name="Bucurenci N."/>
            <person name="Onu A."/>
            <person name="Assairi L."/>
            <person name="Ionescu M."/>
            <person name="Palibroda N."/>
            <person name="Barzu O."/>
            <person name="Gilles A.-M."/>
        </authorList>
    </citation>
    <scope>FUNCTION</scope>
    <scope>ACTIVITY REGULATION</scope>
    <scope>IDENTIFICATION BY MASS SPECTROMETRY</scope>
    <scope>SUBUNIT</scope>
</reference>
<comment type="function">
    <text evidence="3">Catalyzes the reversible phosphorylation of UMP to UDP.</text>
</comment>
<comment type="catalytic activity">
    <reaction>
        <text>UMP + ATP = UDP + ADP</text>
        <dbReference type="Rhea" id="RHEA:24400"/>
        <dbReference type="ChEBI" id="CHEBI:30616"/>
        <dbReference type="ChEBI" id="CHEBI:57865"/>
        <dbReference type="ChEBI" id="CHEBI:58223"/>
        <dbReference type="ChEBI" id="CHEBI:456216"/>
        <dbReference type="EC" id="2.7.4.22"/>
    </reaction>
</comment>
<comment type="activity regulation">
    <text evidence="3">Allosterically activated by GTP. Probably inhibited by UTP.</text>
</comment>
<comment type="pathway">
    <text>Pyrimidine metabolism; CTP biosynthesis via de novo pathway; UDP from UMP (UMPK route): step 1/1.</text>
</comment>
<comment type="subunit">
    <text evidence="3">Homohexamer.</text>
</comment>
<comment type="subcellular location">
    <subcellularLocation>
        <location evidence="1">Cytoplasm</location>
    </subcellularLocation>
</comment>
<comment type="similarity">
    <text evidence="4">Belongs to the UMP kinase family.</text>
</comment>
<gene>
    <name type="primary">pyrH</name>
    <name type="ordered locus">STM0218</name>
</gene>
<feature type="chain" id="PRO_0000143879" description="Uridylate kinase">
    <location>
        <begin position="1"/>
        <end position="241"/>
    </location>
</feature>
<feature type="region of interest" description="Involved in allosteric activation by GTP" evidence="2">
    <location>
        <begin position="23"/>
        <end position="28"/>
    </location>
</feature>
<feature type="binding site" evidence="1">
    <location>
        <begin position="15"/>
        <end position="18"/>
    </location>
    <ligand>
        <name>ATP</name>
        <dbReference type="ChEBI" id="CHEBI:30616"/>
    </ligand>
</feature>
<feature type="binding site" evidence="1">
    <location>
        <position position="57"/>
    </location>
    <ligand>
        <name>UMP</name>
        <dbReference type="ChEBI" id="CHEBI:57865"/>
    </ligand>
</feature>
<feature type="binding site" evidence="1">
    <location>
        <position position="58"/>
    </location>
    <ligand>
        <name>ATP</name>
        <dbReference type="ChEBI" id="CHEBI:30616"/>
    </ligand>
</feature>
<feature type="binding site" evidence="1">
    <location>
        <position position="62"/>
    </location>
    <ligand>
        <name>ATP</name>
        <dbReference type="ChEBI" id="CHEBI:30616"/>
    </ligand>
</feature>
<feature type="binding site" evidence="1">
    <location>
        <position position="77"/>
    </location>
    <ligand>
        <name>UMP</name>
        <dbReference type="ChEBI" id="CHEBI:57865"/>
    </ligand>
</feature>
<feature type="binding site" evidence="1">
    <location>
        <begin position="138"/>
        <end position="145"/>
    </location>
    <ligand>
        <name>UMP</name>
        <dbReference type="ChEBI" id="CHEBI:57865"/>
    </ligand>
</feature>
<feature type="binding site" evidence="1">
    <location>
        <position position="165"/>
    </location>
    <ligand>
        <name>ATP</name>
        <dbReference type="ChEBI" id="CHEBI:30616"/>
    </ligand>
</feature>
<feature type="binding site" evidence="1">
    <location>
        <position position="171"/>
    </location>
    <ligand>
        <name>ATP</name>
        <dbReference type="ChEBI" id="CHEBI:30616"/>
    </ligand>
</feature>
<feature type="binding site" evidence="1">
    <location>
        <position position="174"/>
    </location>
    <ligand>
        <name>ATP</name>
        <dbReference type="ChEBI" id="CHEBI:30616"/>
    </ligand>
</feature>
<organism>
    <name type="scientific">Salmonella typhimurium (strain LT2 / SGSC1412 / ATCC 700720)</name>
    <dbReference type="NCBI Taxonomy" id="99287"/>
    <lineage>
        <taxon>Bacteria</taxon>
        <taxon>Pseudomonadati</taxon>
        <taxon>Pseudomonadota</taxon>
        <taxon>Gammaproteobacteria</taxon>
        <taxon>Enterobacterales</taxon>
        <taxon>Enterobacteriaceae</taxon>
        <taxon>Salmonella</taxon>
    </lineage>
</organism>
<protein>
    <recommendedName>
        <fullName>Uridylate kinase</fullName>
        <shortName>UK</shortName>
        <ecNumber>2.7.4.22</ecNumber>
    </recommendedName>
    <alternativeName>
        <fullName>Uridine monophosphate kinase</fullName>
        <shortName>UMP kinase</shortName>
        <shortName>UMPK</shortName>
    </alternativeName>
</protein>
<accession>P65933</accession>
<accession>Q8XEQ6</accession>
<name>PYRH_SALTY</name>
<evidence type="ECO:0000250" key="1"/>
<evidence type="ECO:0000255" key="2"/>
<evidence type="ECO:0000269" key="3">
    <source>
    </source>
</evidence>
<evidence type="ECO:0000305" key="4"/>
<keyword id="KW-0021">Allosteric enzyme</keyword>
<keyword id="KW-0067">ATP-binding</keyword>
<keyword id="KW-0963">Cytoplasm</keyword>
<keyword id="KW-0418">Kinase</keyword>
<keyword id="KW-0547">Nucleotide-binding</keyword>
<keyword id="KW-0665">Pyrimidine biosynthesis</keyword>
<keyword id="KW-1185">Reference proteome</keyword>
<keyword id="KW-0808">Transferase</keyword>
<dbReference type="EC" id="2.7.4.22"/>
<dbReference type="EMBL" id="AE006468">
    <property type="protein sequence ID" value="AAL19182.1"/>
    <property type="molecule type" value="Genomic_DNA"/>
</dbReference>
<dbReference type="RefSeq" id="NP_459223.1">
    <property type="nucleotide sequence ID" value="NC_003197.2"/>
</dbReference>
<dbReference type="RefSeq" id="WP_000224567.1">
    <property type="nucleotide sequence ID" value="NC_003197.2"/>
</dbReference>
<dbReference type="SMR" id="P65933"/>
<dbReference type="STRING" id="99287.STM0218"/>
<dbReference type="PaxDb" id="99287-STM0218"/>
<dbReference type="GeneID" id="1251736"/>
<dbReference type="KEGG" id="stm:STM0218"/>
<dbReference type="PATRIC" id="fig|99287.12.peg.231"/>
<dbReference type="HOGENOM" id="CLU_033861_0_0_6"/>
<dbReference type="OMA" id="LMGDKQF"/>
<dbReference type="PhylomeDB" id="P65933"/>
<dbReference type="BioCyc" id="SENT99287:STM0218-MONOMER"/>
<dbReference type="BRENDA" id="2.7.4.22">
    <property type="organism ID" value="5542"/>
</dbReference>
<dbReference type="UniPathway" id="UPA00159">
    <property type="reaction ID" value="UER00275"/>
</dbReference>
<dbReference type="Proteomes" id="UP000001014">
    <property type="component" value="Chromosome"/>
</dbReference>
<dbReference type="GO" id="GO:0005829">
    <property type="term" value="C:cytosol"/>
    <property type="evidence" value="ECO:0000318"/>
    <property type="project" value="GO_Central"/>
</dbReference>
<dbReference type="GO" id="GO:0005524">
    <property type="term" value="F:ATP binding"/>
    <property type="evidence" value="ECO:0007669"/>
    <property type="project" value="UniProtKB-KW"/>
</dbReference>
<dbReference type="GO" id="GO:0033862">
    <property type="term" value="F:UMP kinase activity"/>
    <property type="evidence" value="ECO:0000318"/>
    <property type="project" value="GO_Central"/>
</dbReference>
<dbReference type="GO" id="GO:0044210">
    <property type="term" value="P:'de novo' CTP biosynthetic process"/>
    <property type="evidence" value="ECO:0007669"/>
    <property type="project" value="UniProtKB-UniRule"/>
</dbReference>
<dbReference type="GO" id="GO:0006225">
    <property type="term" value="P:UDP biosynthetic process"/>
    <property type="evidence" value="ECO:0000318"/>
    <property type="project" value="GO_Central"/>
</dbReference>
<dbReference type="CDD" id="cd04254">
    <property type="entry name" value="AAK_UMPK-PyrH-Ec"/>
    <property type="match status" value="1"/>
</dbReference>
<dbReference type="FunFam" id="3.40.1160.10:FF:000001">
    <property type="entry name" value="Uridylate kinase"/>
    <property type="match status" value="1"/>
</dbReference>
<dbReference type="Gene3D" id="3.40.1160.10">
    <property type="entry name" value="Acetylglutamate kinase-like"/>
    <property type="match status" value="1"/>
</dbReference>
<dbReference type="HAMAP" id="MF_01220_B">
    <property type="entry name" value="PyrH_B"/>
    <property type="match status" value="1"/>
</dbReference>
<dbReference type="InterPro" id="IPR036393">
    <property type="entry name" value="AceGlu_kinase-like_sf"/>
</dbReference>
<dbReference type="InterPro" id="IPR001048">
    <property type="entry name" value="Asp/Glu/Uridylate_kinase"/>
</dbReference>
<dbReference type="InterPro" id="IPR011817">
    <property type="entry name" value="Uridylate_kinase"/>
</dbReference>
<dbReference type="InterPro" id="IPR015963">
    <property type="entry name" value="Uridylate_kinase_bac"/>
</dbReference>
<dbReference type="NCBIfam" id="TIGR02075">
    <property type="entry name" value="pyrH_bact"/>
    <property type="match status" value="1"/>
</dbReference>
<dbReference type="PANTHER" id="PTHR42833">
    <property type="entry name" value="URIDYLATE KINASE"/>
    <property type="match status" value="1"/>
</dbReference>
<dbReference type="PANTHER" id="PTHR42833:SF4">
    <property type="entry name" value="URIDYLATE KINASE PUMPKIN, CHLOROPLASTIC"/>
    <property type="match status" value="1"/>
</dbReference>
<dbReference type="Pfam" id="PF00696">
    <property type="entry name" value="AA_kinase"/>
    <property type="match status" value="1"/>
</dbReference>
<dbReference type="PIRSF" id="PIRSF005650">
    <property type="entry name" value="Uridylate_kin"/>
    <property type="match status" value="1"/>
</dbReference>
<dbReference type="SUPFAM" id="SSF53633">
    <property type="entry name" value="Carbamate kinase-like"/>
    <property type="match status" value="1"/>
</dbReference>